<comment type="function">
    <text evidence="1">Catalyzes the addition and repair of the essential 3'-terminal CCA sequence in tRNAs without using a nucleic acid template. Adds these three nucleotides in the order of C, C, and A to the tRNA nucleotide-73, using CTP and ATP as substrates and producing inorganic pyrophosphate. tRNA 3'-terminal CCA addition is required both for tRNA processing and repair. Also involved in tRNA surveillance by mediating tandem CCA addition to generate a CCACCA at the 3' terminus of unstable tRNAs. While stable tRNAs receive only 3'-terminal CCA, unstable tRNAs are marked with CCACCA and rapidly degraded.</text>
</comment>
<comment type="catalytic activity">
    <reaction evidence="1">
        <text>a tRNA precursor + 2 CTP + ATP = a tRNA with a 3' CCA end + 3 diphosphate</text>
        <dbReference type="Rhea" id="RHEA:14433"/>
        <dbReference type="Rhea" id="RHEA-COMP:10465"/>
        <dbReference type="Rhea" id="RHEA-COMP:10468"/>
        <dbReference type="ChEBI" id="CHEBI:30616"/>
        <dbReference type="ChEBI" id="CHEBI:33019"/>
        <dbReference type="ChEBI" id="CHEBI:37563"/>
        <dbReference type="ChEBI" id="CHEBI:74896"/>
        <dbReference type="ChEBI" id="CHEBI:83071"/>
        <dbReference type="EC" id="2.7.7.72"/>
    </reaction>
</comment>
<comment type="catalytic activity">
    <reaction evidence="1">
        <text>a tRNA with a 3' CCA end + 2 CTP + ATP = a tRNA with a 3' CCACCA end + 3 diphosphate</text>
        <dbReference type="Rhea" id="RHEA:76235"/>
        <dbReference type="Rhea" id="RHEA-COMP:10468"/>
        <dbReference type="Rhea" id="RHEA-COMP:18655"/>
        <dbReference type="ChEBI" id="CHEBI:30616"/>
        <dbReference type="ChEBI" id="CHEBI:33019"/>
        <dbReference type="ChEBI" id="CHEBI:37563"/>
        <dbReference type="ChEBI" id="CHEBI:83071"/>
        <dbReference type="ChEBI" id="CHEBI:195187"/>
    </reaction>
    <physiologicalReaction direction="left-to-right" evidence="1">
        <dbReference type="Rhea" id="RHEA:76236"/>
    </physiologicalReaction>
</comment>
<comment type="cofactor">
    <cofactor evidence="1">
        <name>Mg(2+)</name>
        <dbReference type="ChEBI" id="CHEBI:18420"/>
    </cofactor>
</comment>
<comment type="subunit">
    <text evidence="1">Homodimer.</text>
</comment>
<comment type="miscellaneous">
    <text evidence="1">A single active site specifically recognizes both ATP and CTP and is responsible for their addition.</text>
</comment>
<comment type="similarity">
    <text evidence="1">Belongs to the tRNA nucleotidyltransferase/poly(A) polymerase family. Bacterial CCA-adding enzyme type 3 subfamily.</text>
</comment>
<feature type="chain" id="PRO_1000054333" description="CCA-adding enzyme">
    <location>
        <begin position="1"/>
        <end position="400"/>
    </location>
</feature>
<feature type="binding site" evidence="1">
    <location>
        <position position="28"/>
    </location>
    <ligand>
        <name>ATP</name>
        <dbReference type="ChEBI" id="CHEBI:30616"/>
    </ligand>
</feature>
<feature type="binding site" evidence="1">
    <location>
        <position position="28"/>
    </location>
    <ligand>
        <name>CTP</name>
        <dbReference type="ChEBI" id="CHEBI:37563"/>
    </ligand>
</feature>
<feature type="binding site" evidence="1">
    <location>
        <position position="31"/>
    </location>
    <ligand>
        <name>ATP</name>
        <dbReference type="ChEBI" id="CHEBI:30616"/>
    </ligand>
</feature>
<feature type="binding site" evidence="1">
    <location>
        <position position="31"/>
    </location>
    <ligand>
        <name>CTP</name>
        <dbReference type="ChEBI" id="CHEBI:37563"/>
    </ligand>
</feature>
<feature type="binding site" evidence="1">
    <location>
        <position position="41"/>
    </location>
    <ligand>
        <name>Mg(2+)</name>
        <dbReference type="ChEBI" id="CHEBI:18420"/>
    </ligand>
</feature>
<feature type="binding site" evidence="1">
    <location>
        <position position="43"/>
    </location>
    <ligand>
        <name>Mg(2+)</name>
        <dbReference type="ChEBI" id="CHEBI:18420"/>
    </ligand>
</feature>
<feature type="binding site" evidence="1">
    <location>
        <position position="112"/>
    </location>
    <ligand>
        <name>ATP</name>
        <dbReference type="ChEBI" id="CHEBI:30616"/>
    </ligand>
</feature>
<feature type="binding site" evidence="1">
    <location>
        <position position="112"/>
    </location>
    <ligand>
        <name>CTP</name>
        <dbReference type="ChEBI" id="CHEBI:37563"/>
    </ligand>
</feature>
<feature type="binding site" evidence="1">
    <location>
        <position position="155"/>
    </location>
    <ligand>
        <name>ATP</name>
        <dbReference type="ChEBI" id="CHEBI:30616"/>
    </ligand>
</feature>
<feature type="binding site" evidence="1">
    <location>
        <position position="155"/>
    </location>
    <ligand>
        <name>CTP</name>
        <dbReference type="ChEBI" id="CHEBI:37563"/>
    </ligand>
</feature>
<feature type="binding site" evidence="1">
    <location>
        <position position="158"/>
    </location>
    <ligand>
        <name>ATP</name>
        <dbReference type="ChEBI" id="CHEBI:30616"/>
    </ligand>
</feature>
<feature type="binding site" evidence="1">
    <location>
        <position position="158"/>
    </location>
    <ligand>
        <name>CTP</name>
        <dbReference type="ChEBI" id="CHEBI:37563"/>
    </ligand>
</feature>
<feature type="binding site" evidence="1">
    <location>
        <position position="161"/>
    </location>
    <ligand>
        <name>ATP</name>
        <dbReference type="ChEBI" id="CHEBI:30616"/>
    </ligand>
</feature>
<feature type="binding site" evidence="1">
    <location>
        <position position="161"/>
    </location>
    <ligand>
        <name>CTP</name>
        <dbReference type="ChEBI" id="CHEBI:37563"/>
    </ligand>
</feature>
<feature type="binding site" evidence="1">
    <location>
        <position position="164"/>
    </location>
    <ligand>
        <name>ATP</name>
        <dbReference type="ChEBI" id="CHEBI:30616"/>
    </ligand>
</feature>
<feature type="binding site" evidence="1">
    <location>
        <position position="164"/>
    </location>
    <ligand>
        <name>CTP</name>
        <dbReference type="ChEBI" id="CHEBI:37563"/>
    </ligand>
</feature>
<protein>
    <recommendedName>
        <fullName evidence="1">CCA-adding enzyme</fullName>
        <ecNumber evidence="1">2.7.7.72</ecNumber>
    </recommendedName>
    <alternativeName>
        <fullName evidence="1">CCA tRNA nucleotidyltransferase</fullName>
    </alternativeName>
    <alternativeName>
        <fullName evidence="1">tRNA CCA-pyrophosphorylase</fullName>
    </alternativeName>
    <alternativeName>
        <fullName evidence="1">tRNA adenylyl-/cytidylyl- transferase</fullName>
    </alternativeName>
    <alternativeName>
        <fullName evidence="1">tRNA nucleotidyltransferase</fullName>
    </alternativeName>
    <alternativeName>
        <fullName evidence="1">tRNA-NT</fullName>
    </alternativeName>
</protein>
<organism>
    <name type="scientific">Staphylococcus aureus (strain Mu3 / ATCC 700698)</name>
    <dbReference type="NCBI Taxonomy" id="418127"/>
    <lineage>
        <taxon>Bacteria</taxon>
        <taxon>Bacillati</taxon>
        <taxon>Bacillota</taxon>
        <taxon>Bacilli</taxon>
        <taxon>Bacillales</taxon>
        <taxon>Staphylococcaceae</taxon>
        <taxon>Staphylococcus</taxon>
    </lineage>
</organism>
<sequence>MDKSLFEQARPILEQIQDNGFEAYYVGGSVRDYVMGRNIHDIDITTSATPDEIESIFSHTIPVGKEHGTINVVFNDENYEVTTFRAEEDYVDHRRPSGVTFVRDLYEDLQRRDFTMNAIAMDTAYKLYDYFDGQQDINNRIIRTVGIAEERFQEDALRMIRCLRFQSQLSFDIAMETFEAMRTQMADIKFLSIERIVIELTKLMRGINVEESFNHLKSLKAFNYMPYFEQLDMNQINVTEPIDLELLIAIVSVKFDINYSLKPLKLSNRQVKDINQYIQIMNALPSIITKEQLKMFVYDYDTNLIKNVMVAADVLKANDIQGHEPLIVNLQTIDETLHRLPMHNRKDMMVNGGVLMAHLNAKSGPWLKDVLRQIEIAIVTGKVSNEETEILKWVDNHVKI</sequence>
<gene>
    <name evidence="1" type="primary">cca</name>
    <name type="ordered locus">SAHV_1445</name>
</gene>
<evidence type="ECO:0000255" key="1">
    <source>
        <dbReference type="HAMAP-Rule" id="MF_01263"/>
    </source>
</evidence>
<keyword id="KW-0067">ATP-binding</keyword>
<keyword id="KW-0460">Magnesium</keyword>
<keyword id="KW-0479">Metal-binding</keyword>
<keyword id="KW-0547">Nucleotide-binding</keyword>
<keyword id="KW-0548">Nucleotidyltransferase</keyword>
<keyword id="KW-0692">RNA repair</keyword>
<keyword id="KW-0694">RNA-binding</keyword>
<keyword id="KW-0808">Transferase</keyword>
<keyword id="KW-0819">tRNA processing</keyword>
<dbReference type="EC" id="2.7.7.72" evidence="1"/>
<dbReference type="EMBL" id="AP009324">
    <property type="protein sequence ID" value="BAF78328.1"/>
    <property type="molecule type" value="Genomic_DNA"/>
</dbReference>
<dbReference type="RefSeq" id="WP_000361540.1">
    <property type="nucleotide sequence ID" value="NC_009782.1"/>
</dbReference>
<dbReference type="SMR" id="A7X2F4"/>
<dbReference type="KEGG" id="saw:SAHV_1445"/>
<dbReference type="HOGENOM" id="CLU_015961_3_0_9"/>
<dbReference type="GO" id="GO:0005524">
    <property type="term" value="F:ATP binding"/>
    <property type="evidence" value="ECO:0007669"/>
    <property type="project" value="UniProtKB-UniRule"/>
</dbReference>
<dbReference type="GO" id="GO:0004810">
    <property type="term" value="F:CCA tRNA nucleotidyltransferase activity"/>
    <property type="evidence" value="ECO:0007669"/>
    <property type="project" value="UniProtKB-UniRule"/>
</dbReference>
<dbReference type="GO" id="GO:0000287">
    <property type="term" value="F:magnesium ion binding"/>
    <property type="evidence" value="ECO:0007669"/>
    <property type="project" value="UniProtKB-UniRule"/>
</dbReference>
<dbReference type="GO" id="GO:0000049">
    <property type="term" value="F:tRNA binding"/>
    <property type="evidence" value="ECO:0007669"/>
    <property type="project" value="UniProtKB-UniRule"/>
</dbReference>
<dbReference type="GO" id="GO:0042245">
    <property type="term" value="P:RNA repair"/>
    <property type="evidence" value="ECO:0007669"/>
    <property type="project" value="UniProtKB-KW"/>
</dbReference>
<dbReference type="GO" id="GO:0001680">
    <property type="term" value="P:tRNA 3'-terminal CCA addition"/>
    <property type="evidence" value="ECO:0007669"/>
    <property type="project" value="UniProtKB-UniRule"/>
</dbReference>
<dbReference type="CDD" id="cd05398">
    <property type="entry name" value="NT_ClassII-CCAase"/>
    <property type="match status" value="1"/>
</dbReference>
<dbReference type="Gene3D" id="1.10.246.80">
    <property type="match status" value="1"/>
</dbReference>
<dbReference type="Gene3D" id="3.30.460.10">
    <property type="entry name" value="Beta Polymerase, domain 2"/>
    <property type="match status" value="1"/>
</dbReference>
<dbReference type="Gene3D" id="1.10.3090.10">
    <property type="entry name" value="cca-adding enzyme, domain 2"/>
    <property type="match status" value="1"/>
</dbReference>
<dbReference type="HAMAP" id="MF_01263">
    <property type="entry name" value="CCA_bact_type3"/>
    <property type="match status" value="1"/>
</dbReference>
<dbReference type="InterPro" id="IPR050264">
    <property type="entry name" value="Bact_CCA-adding_enz_type3_sf"/>
</dbReference>
<dbReference type="InterPro" id="IPR032810">
    <property type="entry name" value="CCA-adding_enz_C"/>
</dbReference>
<dbReference type="InterPro" id="IPR023068">
    <property type="entry name" value="CCA-adding_enz_firmicutes"/>
</dbReference>
<dbReference type="InterPro" id="IPR043519">
    <property type="entry name" value="NT_sf"/>
</dbReference>
<dbReference type="InterPro" id="IPR002646">
    <property type="entry name" value="PolA_pol_head_dom"/>
</dbReference>
<dbReference type="InterPro" id="IPR032828">
    <property type="entry name" value="PolyA_RNA-bd"/>
</dbReference>
<dbReference type="NCBIfam" id="NF009814">
    <property type="entry name" value="PRK13299.1"/>
    <property type="match status" value="1"/>
</dbReference>
<dbReference type="PANTHER" id="PTHR46173">
    <property type="entry name" value="CCA TRNA NUCLEOTIDYLTRANSFERASE 1, MITOCHONDRIAL"/>
    <property type="match status" value="1"/>
</dbReference>
<dbReference type="PANTHER" id="PTHR46173:SF1">
    <property type="entry name" value="CCA TRNA NUCLEOTIDYLTRANSFERASE 1, MITOCHONDRIAL"/>
    <property type="match status" value="1"/>
</dbReference>
<dbReference type="Pfam" id="PF01743">
    <property type="entry name" value="PolyA_pol"/>
    <property type="match status" value="1"/>
</dbReference>
<dbReference type="Pfam" id="PF12627">
    <property type="entry name" value="PolyA_pol_RNAbd"/>
    <property type="match status" value="1"/>
</dbReference>
<dbReference type="Pfam" id="PF13735">
    <property type="entry name" value="tRNA_NucTran2_2"/>
    <property type="match status" value="1"/>
</dbReference>
<dbReference type="SUPFAM" id="SSF81301">
    <property type="entry name" value="Nucleotidyltransferase"/>
    <property type="match status" value="1"/>
</dbReference>
<dbReference type="SUPFAM" id="SSF81891">
    <property type="entry name" value="Poly A polymerase C-terminal region-like"/>
    <property type="match status" value="1"/>
</dbReference>
<proteinExistence type="inferred from homology"/>
<reference key="1">
    <citation type="journal article" date="2008" name="Antimicrob. Agents Chemother.">
        <title>Mutated response regulator graR is responsible for phenotypic conversion of Staphylococcus aureus from heterogeneous vancomycin-intermediate resistance to vancomycin-intermediate resistance.</title>
        <authorList>
            <person name="Neoh H.-M."/>
            <person name="Cui L."/>
            <person name="Yuzawa H."/>
            <person name="Takeuchi F."/>
            <person name="Matsuo M."/>
            <person name="Hiramatsu K."/>
        </authorList>
    </citation>
    <scope>NUCLEOTIDE SEQUENCE [LARGE SCALE GENOMIC DNA]</scope>
    <source>
        <strain>Mu3 / ATCC 700698</strain>
    </source>
</reference>
<accession>A7X2F4</accession>
<name>CCA_STAA1</name>